<comment type="function">
    <text>Involved in the oxidative degradation of abscisic acid.</text>
</comment>
<comment type="catalytic activity">
    <reaction evidence="2">
        <text>2-cis-(+)-abscisate + reduced [NADPH--hemoprotein reductase] + O2 = (+)-8'-hydroxyabscisate + oxidized [NADPH--hemoprotein reductase] + H2O + H(+)</text>
        <dbReference type="Rhea" id="RHEA:12897"/>
        <dbReference type="Rhea" id="RHEA-COMP:11964"/>
        <dbReference type="Rhea" id="RHEA-COMP:11965"/>
        <dbReference type="ChEBI" id="CHEBI:15377"/>
        <dbReference type="ChEBI" id="CHEBI:15378"/>
        <dbReference type="ChEBI" id="CHEBI:15379"/>
        <dbReference type="ChEBI" id="CHEBI:37569"/>
        <dbReference type="ChEBI" id="CHEBI:57618"/>
        <dbReference type="ChEBI" id="CHEBI:58210"/>
        <dbReference type="ChEBI" id="CHEBI:58490"/>
        <dbReference type="EC" id="1.14.14.137"/>
    </reaction>
</comment>
<comment type="cofactor">
    <cofactor evidence="1">
        <name>heme</name>
        <dbReference type="ChEBI" id="CHEBI:30413"/>
    </cofactor>
</comment>
<comment type="pathway">
    <text>Plant hormone degradation; abscisic acid degradation.</text>
</comment>
<comment type="subcellular location">
    <subcellularLocation>
        <location evidence="4">Endoplasmic reticulum membrane</location>
        <topology evidence="4">Single-pass membrane protein</topology>
    </subcellularLocation>
</comment>
<comment type="induction">
    <text evidence="4">By ethylene treatment and by flooding.</text>
</comment>
<comment type="similarity">
    <text evidence="5">Belongs to the cytochrome P450 family.</text>
</comment>
<comment type="sequence caution" evidence="5">
    <conflict type="erroneous gene model prediction">
        <sequence resource="EMBL-CDS" id="BAD07562"/>
    </conflict>
</comment>
<comment type="sequence caution" evidence="5">
    <conflict type="erroneous gene model prediction">
        <sequence resource="EMBL-CDS" id="BAD08071"/>
    </conflict>
</comment>
<comment type="sequence caution" evidence="5">
    <conflict type="erroneous gene model prediction">
        <sequence resource="EMBL-CDS" id="BAF09769"/>
    </conflict>
</comment>
<keyword id="KW-0256">Endoplasmic reticulum</keyword>
<keyword id="KW-0349">Heme</keyword>
<keyword id="KW-0408">Iron</keyword>
<keyword id="KW-0472">Membrane</keyword>
<keyword id="KW-0479">Metal-binding</keyword>
<keyword id="KW-0503">Monooxygenase</keyword>
<keyword id="KW-0560">Oxidoreductase</keyword>
<keyword id="KW-1185">Reference proteome</keyword>
<keyword id="KW-0346">Stress response</keyword>
<keyword id="KW-0812">Transmembrane</keyword>
<keyword id="KW-1133">Transmembrane helix</keyword>
<gene>
    <name type="primary">CYP707A5</name>
    <name type="synonym">ABA8OX1</name>
    <name type="ordered locus">Os02g0703600</name>
    <name type="ordered locus">LOC_Os02g47470</name>
    <name type="ORF">OJ1218_D07.28</name>
    <name type="ORF">OsJ_007800</name>
    <name type="ORF">P0724B10.17</name>
</gene>
<reference key="1">
    <citation type="journal article" date="2007" name="Plant Cell Physiol.">
        <title>Ethylene promotes submergence-induced expression of OsABA8ox1, a gene that encodes ABA 8'-hydroxylase in rice.</title>
        <authorList>
            <person name="Saika H."/>
            <person name="Okamoto M."/>
            <person name="Miyoshi K."/>
            <person name="Kushiro T."/>
            <person name="Shinoda S."/>
            <person name="Jikumaru Y."/>
            <person name="Fujimoto M."/>
            <person name="Arikawa T."/>
            <person name="Takahashi H."/>
            <person name="Ando M."/>
            <person name="Arimura S."/>
            <person name="Miyao A."/>
            <person name="Hirochika H."/>
            <person name="Kamiya Y."/>
            <person name="Tsutsumi N."/>
            <person name="Nambara E."/>
            <person name="Nakazono M."/>
        </authorList>
    </citation>
    <scope>NUCLEOTIDE SEQUENCE [MRNA]</scope>
    <scope>SUBCELLULAR LOCATION</scope>
    <scope>INDUCTION</scope>
    <source>
        <strain>cv. Nipponbare</strain>
    </source>
</reference>
<reference key="2">
    <citation type="journal article" date="2005" name="Nature">
        <title>The map-based sequence of the rice genome.</title>
        <authorList>
            <consortium name="International rice genome sequencing project (IRGSP)"/>
        </authorList>
    </citation>
    <scope>NUCLEOTIDE SEQUENCE [LARGE SCALE GENOMIC DNA]</scope>
    <source>
        <strain>cv. Nipponbare</strain>
    </source>
</reference>
<reference key="3">
    <citation type="journal article" date="2008" name="Nucleic Acids Res.">
        <title>The rice annotation project database (RAP-DB): 2008 update.</title>
        <authorList>
            <consortium name="The rice annotation project (RAP)"/>
        </authorList>
    </citation>
    <scope>GENOME REANNOTATION</scope>
    <source>
        <strain>cv. Nipponbare</strain>
    </source>
</reference>
<reference key="4">
    <citation type="journal article" date="2013" name="Rice">
        <title>Improvement of the Oryza sativa Nipponbare reference genome using next generation sequence and optical map data.</title>
        <authorList>
            <person name="Kawahara Y."/>
            <person name="de la Bastide M."/>
            <person name="Hamilton J.P."/>
            <person name="Kanamori H."/>
            <person name="McCombie W.R."/>
            <person name="Ouyang S."/>
            <person name="Schwartz D.C."/>
            <person name="Tanaka T."/>
            <person name="Wu J."/>
            <person name="Zhou S."/>
            <person name="Childs K.L."/>
            <person name="Davidson R.M."/>
            <person name="Lin H."/>
            <person name="Quesada-Ocampo L."/>
            <person name="Vaillancourt B."/>
            <person name="Sakai H."/>
            <person name="Lee S.S."/>
            <person name="Kim J."/>
            <person name="Numa H."/>
            <person name="Itoh T."/>
            <person name="Buell C.R."/>
            <person name="Matsumoto T."/>
        </authorList>
    </citation>
    <scope>GENOME REANNOTATION</scope>
    <source>
        <strain>cv. Nipponbare</strain>
    </source>
</reference>
<reference key="5">
    <citation type="journal article" date="2005" name="PLoS Biol.">
        <title>The genomes of Oryza sativa: a history of duplications.</title>
        <authorList>
            <person name="Yu J."/>
            <person name="Wang J."/>
            <person name="Lin W."/>
            <person name="Li S."/>
            <person name="Li H."/>
            <person name="Zhou J."/>
            <person name="Ni P."/>
            <person name="Dong W."/>
            <person name="Hu S."/>
            <person name="Zeng C."/>
            <person name="Zhang J."/>
            <person name="Zhang Y."/>
            <person name="Li R."/>
            <person name="Xu Z."/>
            <person name="Li S."/>
            <person name="Li X."/>
            <person name="Zheng H."/>
            <person name="Cong L."/>
            <person name="Lin L."/>
            <person name="Yin J."/>
            <person name="Geng J."/>
            <person name="Li G."/>
            <person name="Shi J."/>
            <person name="Liu J."/>
            <person name="Lv H."/>
            <person name="Li J."/>
            <person name="Wang J."/>
            <person name="Deng Y."/>
            <person name="Ran L."/>
            <person name="Shi X."/>
            <person name="Wang X."/>
            <person name="Wu Q."/>
            <person name="Li C."/>
            <person name="Ren X."/>
            <person name="Wang J."/>
            <person name="Wang X."/>
            <person name="Li D."/>
            <person name="Liu D."/>
            <person name="Zhang X."/>
            <person name="Ji Z."/>
            <person name="Zhao W."/>
            <person name="Sun Y."/>
            <person name="Zhang Z."/>
            <person name="Bao J."/>
            <person name="Han Y."/>
            <person name="Dong L."/>
            <person name="Ji J."/>
            <person name="Chen P."/>
            <person name="Wu S."/>
            <person name="Liu J."/>
            <person name="Xiao Y."/>
            <person name="Bu D."/>
            <person name="Tan J."/>
            <person name="Yang L."/>
            <person name="Ye C."/>
            <person name="Zhang J."/>
            <person name="Xu J."/>
            <person name="Zhou Y."/>
            <person name="Yu Y."/>
            <person name="Zhang B."/>
            <person name="Zhuang S."/>
            <person name="Wei H."/>
            <person name="Liu B."/>
            <person name="Lei M."/>
            <person name="Yu H."/>
            <person name="Li Y."/>
            <person name="Xu H."/>
            <person name="Wei S."/>
            <person name="He X."/>
            <person name="Fang L."/>
            <person name="Zhang Z."/>
            <person name="Zhang Y."/>
            <person name="Huang X."/>
            <person name="Su Z."/>
            <person name="Tong W."/>
            <person name="Li J."/>
            <person name="Tong Z."/>
            <person name="Li S."/>
            <person name="Ye J."/>
            <person name="Wang L."/>
            <person name="Fang L."/>
            <person name="Lei T."/>
            <person name="Chen C.-S."/>
            <person name="Chen H.-C."/>
            <person name="Xu Z."/>
            <person name="Li H."/>
            <person name="Huang H."/>
            <person name="Zhang F."/>
            <person name="Xu H."/>
            <person name="Li N."/>
            <person name="Zhao C."/>
            <person name="Li S."/>
            <person name="Dong L."/>
            <person name="Huang Y."/>
            <person name="Li L."/>
            <person name="Xi Y."/>
            <person name="Qi Q."/>
            <person name="Li W."/>
            <person name="Zhang B."/>
            <person name="Hu W."/>
            <person name="Zhang Y."/>
            <person name="Tian X."/>
            <person name="Jiao Y."/>
            <person name="Liang X."/>
            <person name="Jin J."/>
            <person name="Gao L."/>
            <person name="Zheng W."/>
            <person name="Hao B."/>
            <person name="Liu S.-M."/>
            <person name="Wang W."/>
            <person name="Yuan L."/>
            <person name="Cao M."/>
            <person name="McDermott J."/>
            <person name="Samudrala R."/>
            <person name="Wang J."/>
            <person name="Wong G.K.-S."/>
            <person name="Yang H."/>
        </authorList>
    </citation>
    <scope>NUCLEOTIDE SEQUENCE [LARGE SCALE GENOMIC DNA]</scope>
    <source>
        <strain>cv. Nipponbare</strain>
    </source>
</reference>
<protein>
    <recommendedName>
        <fullName>Abscisic acid 8'-hydroxylase 1</fullName>
        <shortName>ABA 8'-hydroxylase 1</shortName>
        <ecNumber evidence="2">1.14.14.137</ecNumber>
    </recommendedName>
    <alternativeName>
        <fullName>Cytochrome P450 707A5</fullName>
    </alternativeName>
    <alternativeName>
        <fullName>OsABA8ox1</fullName>
    </alternativeName>
</protein>
<accession>Q05JG2</accession>
<accession>Q6YVJ4</accession>
<sequence>MGAFLLFVCVLAPFLLVCAVRGRRRQAGSSEAAACGLPLPPGSMGWPYVGETFQLYSSKNPNVFFNKKRNKYGPIFKTHILGCPCVMVSSPEAARFVLVTQAHLFKPTFPASKERMLGPQAIFFQQGDYHAHLRRIVSRAFSPESIRASVPAIEAIALRSLHSWDGQFVNTFQEMKTYALNVALLSIFGEEEMRYIEELKQCYLTLEKGYNSMPVNLPGTLFHKAMKARKRLGAIVAHIISARRERQRGNDLLGSFVDGREALTDAQIADNVIGVIFAARDTTASVLTWMVKFLGDHPAVLKAVTEEQLQIAKEKEASGEPLSWADTRRMKMTSRVIQETMRVASILSFTFREAVEDVEYQGYLIPKGWKVLPLFRNIHHNPDHFPCPEKFDPSRFEVAPKPNTFMPFGNGTHSCPGNELAKLEMLVLFHHLATKYRWSTSKSESGVQFGPFALPLNGLPMSFTRKNTEQE</sequence>
<organism>
    <name type="scientific">Oryza sativa subsp. japonica</name>
    <name type="common">Rice</name>
    <dbReference type="NCBI Taxonomy" id="39947"/>
    <lineage>
        <taxon>Eukaryota</taxon>
        <taxon>Viridiplantae</taxon>
        <taxon>Streptophyta</taxon>
        <taxon>Embryophyta</taxon>
        <taxon>Tracheophyta</taxon>
        <taxon>Spermatophyta</taxon>
        <taxon>Magnoliopsida</taxon>
        <taxon>Liliopsida</taxon>
        <taxon>Poales</taxon>
        <taxon>Poaceae</taxon>
        <taxon>BOP clade</taxon>
        <taxon>Oryzoideae</taxon>
        <taxon>Oryzeae</taxon>
        <taxon>Oryzinae</taxon>
        <taxon>Oryza</taxon>
        <taxon>Oryza sativa</taxon>
    </lineage>
</organism>
<evidence type="ECO:0000250" key="1"/>
<evidence type="ECO:0000250" key="2">
    <source>
        <dbReference type="UniProtKB" id="Q949P1"/>
    </source>
</evidence>
<evidence type="ECO:0000255" key="3"/>
<evidence type="ECO:0000269" key="4">
    <source>
    </source>
</evidence>
<evidence type="ECO:0000305" key="5"/>
<name>ABAH1_ORYSJ</name>
<feature type="chain" id="PRO_0000288644" description="Abscisic acid 8'-hydroxylase 1">
    <location>
        <begin position="1"/>
        <end position="471"/>
    </location>
</feature>
<feature type="transmembrane region" description="Helical" evidence="3">
    <location>
        <begin position="1"/>
        <end position="21"/>
    </location>
</feature>
<feature type="binding site" description="axial binding residue" evidence="1">
    <location>
        <position position="415"/>
    </location>
    <ligand>
        <name>heme</name>
        <dbReference type="ChEBI" id="CHEBI:30413"/>
    </ligand>
    <ligandPart>
        <name>Fe</name>
        <dbReference type="ChEBI" id="CHEBI:18248"/>
    </ligandPart>
</feature>
<dbReference type="EC" id="1.14.14.137" evidence="2"/>
<dbReference type="EMBL" id="AB277270">
    <property type="protein sequence ID" value="BAF34848.1"/>
    <property type="molecule type" value="mRNA"/>
</dbReference>
<dbReference type="EMBL" id="AP004052">
    <property type="protein sequence ID" value="BAD07562.1"/>
    <property type="status" value="ALT_SEQ"/>
    <property type="molecule type" value="Genomic_DNA"/>
</dbReference>
<dbReference type="EMBL" id="AP005825">
    <property type="protein sequence ID" value="BAD08071.1"/>
    <property type="status" value="ALT_SEQ"/>
    <property type="molecule type" value="Genomic_DNA"/>
</dbReference>
<dbReference type="EMBL" id="AP008208">
    <property type="protein sequence ID" value="BAF09769.1"/>
    <property type="status" value="ALT_SEQ"/>
    <property type="molecule type" value="Genomic_DNA"/>
</dbReference>
<dbReference type="EMBL" id="AP014958">
    <property type="status" value="NOT_ANNOTATED_CDS"/>
    <property type="molecule type" value="Genomic_DNA"/>
</dbReference>
<dbReference type="EMBL" id="CM000139">
    <property type="protein sequence ID" value="EAZ24317.1"/>
    <property type="molecule type" value="Genomic_DNA"/>
</dbReference>
<dbReference type="RefSeq" id="XP_015627713.1">
    <property type="nucleotide sequence ID" value="XM_015772227.1"/>
</dbReference>
<dbReference type="SMR" id="Q05JG2"/>
<dbReference type="FunCoup" id="Q05JG2">
    <property type="interactions" value="411"/>
</dbReference>
<dbReference type="STRING" id="39947.Q05JG2"/>
<dbReference type="PaxDb" id="39947-Q05JG2"/>
<dbReference type="EnsemblPlants" id="Os02t0703600-02">
    <property type="protein sequence ID" value="Os02t0703600-02"/>
    <property type="gene ID" value="Os02g0703600"/>
</dbReference>
<dbReference type="Gramene" id="Os02t0703600-02">
    <property type="protein sequence ID" value="Os02t0703600-02"/>
    <property type="gene ID" value="Os02g0703600"/>
</dbReference>
<dbReference type="eggNOG" id="KOG0157">
    <property type="taxonomic scope" value="Eukaryota"/>
</dbReference>
<dbReference type="HOGENOM" id="CLU_001570_15_5_1"/>
<dbReference type="InParanoid" id="Q05JG2"/>
<dbReference type="OrthoDB" id="1372046at2759"/>
<dbReference type="BRENDA" id="1.14.14.137">
    <property type="organism ID" value="4460"/>
</dbReference>
<dbReference type="PlantReactome" id="R-OSA-1119609">
    <property type="pathway name" value="Phaseic acid biosynthesis"/>
</dbReference>
<dbReference type="UniPathway" id="UPA00093"/>
<dbReference type="Proteomes" id="UP000000763">
    <property type="component" value="Chromosome 2"/>
</dbReference>
<dbReference type="Proteomes" id="UP000007752">
    <property type="component" value="Chromosome 2"/>
</dbReference>
<dbReference type="Proteomes" id="UP000059680">
    <property type="component" value="Chromosome 2"/>
</dbReference>
<dbReference type="GO" id="GO:0005789">
    <property type="term" value="C:endoplasmic reticulum membrane"/>
    <property type="evidence" value="ECO:0007669"/>
    <property type="project" value="UniProtKB-SubCell"/>
</dbReference>
<dbReference type="GO" id="GO:0010295">
    <property type="term" value="F:(+)-abscisic acid 8'-hydroxylase activity"/>
    <property type="evidence" value="ECO:0007669"/>
    <property type="project" value="UniProtKB-EC"/>
</dbReference>
<dbReference type="GO" id="GO:0020037">
    <property type="term" value="F:heme binding"/>
    <property type="evidence" value="ECO:0007669"/>
    <property type="project" value="InterPro"/>
</dbReference>
<dbReference type="GO" id="GO:0005506">
    <property type="term" value="F:iron ion binding"/>
    <property type="evidence" value="ECO:0007669"/>
    <property type="project" value="InterPro"/>
</dbReference>
<dbReference type="GO" id="GO:0016709">
    <property type="term" value="F:oxidoreductase activity, acting on paired donors, with incorporation or reduction of molecular oxygen, NAD(P)H as one donor, and incorporation of one atom of oxygen"/>
    <property type="evidence" value="ECO:0000318"/>
    <property type="project" value="GO_Central"/>
</dbReference>
<dbReference type="GO" id="GO:0046345">
    <property type="term" value="P:abscisic acid catabolic process"/>
    <property type="evidence" value="ECO:0007669"/>
    <property type="project" value="UniProtKB-UniPathway"/>
</dbReference>
<dbReference type="GO" id="GO:0009687">
    <property type="term" value="P:abscisic acid metabolic process"/>
    <property type="evidence" value="ECO:0000318"/>
    <property type="project" value="GO_Central"/>
</dbReference>
<dbReference type="CDD" id="cd11043">
    <property type="entry name" value="CYP90-like"/>
    <property type="match status" value="1"/>
</dbReference>
<dbReference type="FunFam" id="1.10.630.10:FF:000014">
    <property type="entry name" value="Abscisic acid 8"/>
    <property type="match status" value="1"/>
</dbReference>
<dbReference type="Gene3D" id="1.10.630.10">
    <property type="entry name" value="Cytochrome P450"/>
    <property type="match status" value="1"/>
</dbReference>
<dbReference type="InterPro" id="IPR001128">
    <property type="entry name" value="Cyt_P450"/>
</dbReference>
<dbReference type="InterPro" id="IPR017972">
    <property type="entry name" value="Cyt_P450_CS"/>
</dbReference>
<dbReference type="InterPro" id="IPR002401">
    <property type="entry name" value="Cyt_P450_E_grp-I"/>
</dbReference>
<dbReference type="InterPro" id="IPR036396">
    <property type="entry name" value="Cyt_P450_sf"/>
</dbReference>
<dbReference type="PANTHER" id="PTHR24286:SF10">
    <property type="entry name" value="ABSCISIC ACID 8'-HYDROXYLASE 1"/>
    <property type="match status" value="1"/>
</dbReference>
<dbReference type="PANTHER" id="PTHR24286">
    <property type="entry name" value="CYTOCHROME P450 26"/>
    <property type="match status" value="1"/>
</dbReference>
<dbReference type="Pfam" id="PF00067">
    <property type="entry name" value="p450"/>
    <property type="match status" value="1"/>
</dbReference>
<dbReference type="PRINTS" id="PR00463">
    <property type="entry name" value="EP450I"/>
</dbReference>
<dbReference type="PRINTS" id="PR00385">
    <property type="entry name" value="P450"/>
</dbReference>
<dbReference type="SUPFAM" id="SSF48264">
    <property type="entry name" value="Cytochrome P450"/>
    <property type="match status" value="1"/>
</dbReference>
<dbReference type="PROSITE" id="PS00086">
    <property type="entry name" value="CYTOCHROME_P450"/>
    <property type="match status" value="1"/>
</dbReference>
<proteinExistence type="evidence at transcript level"/>